<dbReference type="EMBL" id="AE017354">
    <property type="protein sequence ID" value="AAU27376.1"/>
    <property type="molecule type" value="Genomic_DNA"/>
</dbReference>
<dbReference type="RefSeq" id="WP_010947024.1">
    <property type="nucleotide sequence ID" value="NC_002942.5"/>
</dbReference>
<dbReference type="RefSeq" id="YP_095323.1">
    <property type="nucleotide sequence ID" value="NC_002942.5"/>
</dbReference>
<dbReference type="STRING" id="272624.lpg1293"/>
<dbReference type="PaxDb" id="272624-lpg1293"/>
<dbReference type="KEGG" id="lpn:lpg1293"/>
<dbReference type="PATRIC" id="fig|272624.6.peg.1361"/>
<dbReference type="eggNOG" id="COG2917">
    <property type="taxonomic scope" value="Bacteria"/>
</dbReference>
<dbReference type="HOGENOM" id="CLU_089554_2_0_6"/>
<dbReference type="OrthoDB" id="9788219at2"/>
<dbReference type="Proteomes" id="UP000000609">
    <property type="component" value="Chromosome"/>
</dbReference>
<dbReference type="GO" id="GO:0005886">
    <property type="term" value="C:plasma membrane"/>
    <property type="evidence" value="ECO:0007669"/>
    <property type="project" value="UniProtKB-SubCell"/>
</dbReference>
<dbReference type="HAMAP" id="MF_00189">
    <property type="entry name" value="YciB"/>
    <property type="match status" value="1"/>
</dbReference>
<dbReference type="InterPro" id="IPR006008">
    <property type="entry name" value="YciB"/>
</dbReference>
<dbReference type="NCBIfam" id="TIGR00997">
    <property type="entry name" value="ispZ"/>
    <property type="match status" value="1"/>
</dbReference>
<dbReference type="NCBIfam" id="NF001325">
    <property type="entry name" value="PRK00259.1-3"/>
    <property type="match status" value="1"/>
</dbReference>
<dbReference type="PANTHER" id="PTHR36917:SF1">
    <property type="entry name" value="INNER MEMBRANE-SPANNING PROTEIN YCIB"/>
    <property type="match status" value="1"/>
</dbReference>
<dbReference type="PANTHER" id="PTHR36917">
    <property type="entry name" value="INTRACELLULAR SEPTATION PROTEIN A-RELATED"/>
    <property type="match status" value="1"/>
</dbReference>
<dbReference type="Pfam" id="PF04279">
    <property type="entry name" value="IspA"/>
    <property type="match status" value="1"/>
</dbReference>
<organism>
    <name type="scientific">Legionella pneumophila subsp. pneumophila (strain Philadelphia 1 / ATCC 33152 / DSM 7513)</name>
    <dbReference type="NCBI Taxonomy" id="272624"/>
    <lineage>
        <taxon>Bacteria</taxon>
        <taxon>Pseudomonadati</taxon>
        <taxon>Pseudomonadota</taxon>
        <taxon>Gammaproteobacteria</taxon>
        <taxon>Legionellales</taxon>
        <taxon>Legionellaceae</taxon>
        <taxon>Legionella</taxon>
    </lineage>
</organism>
<evidence type="ECO:0000255" key="1">
    <source>
        <dbReference type="HAMAP-Rule" id="MF_00189"/>
    </source>
</evidence>
<comment type="function">
    <text evidence="1">Plays a role in cell envelope biogenesis, maintenance of cell envelope integrity and membrane homeostasis.</text>
</comment>
<comment type="subcellular location">
    <subcellularLocation>
        <location evidence="1">Cell inner membrane</location>
        <topology evidence="1">Multi-pass membrane protein</topology>
    </subcellularLocation>
</comment>
<comment type="similarity">
    <text evidence="1">Belongs to the YciB family.</text>
</comment>
<reference key="1">
    <citation type="journal article" date="2004" name="Science">
        <title>The genomic sequence of the accidental pathogen Legionella pneumophila.</title>
        <authorList>
            <person name="Chien M."/>
            <person name="Morozova I."/>
            <person name="Shi S."/>
            <person name="Sheng H."/>
            <person name="Chen J."/>
            <person name="Gomez S.M."/>
            <person name="Asamani G."/>
            <person name="Hill K."/>
            <person name="Nuara J."/>
            <person name="Feder M."/>
            <person name="Rineer J."/>
            <person name="Greenberg J.J."/>
            <person name="Steshenko V."/>
            <person name="Park S.H."/>
            <person name="Zhao B."/>
            <person name="Teplitskaya E."/>
            <person name="Edwards J.R."/>
            <person name="Pampou S."/>
            <person name="Georghiou A."/>
            <person name="Chou I.-C."/>
            <person name="Iannuccilli W."/>
            <person name="Ulz M.E."/>
            <person name="Kim D.H."/>
            <person name="Geringer-Sameth A."/>
            <person name="Goldsberry C."/>
            <person name="Morozov P."/>
            <person name="Fischer S.G."/>
            <person name="Segal G."/>
            <person name="Qu X."/>
            <person name="Rzhetsky A."/>
            <person name="Zhang P."/>
            <person name="Cayanis E."/>
            <person name="De Jong P.J."/>
            <person name="Ju J."/>
            <person name="Kalachikov S."/>
            <person name="Shuman H.A."/>
            <person name="Russo J.J."/>
        </authorList>
    </citation>
    <scope>NUCLEOTIDE SEQUENCE [LARGE SCALE GENOMIC DNA]</scope>
    <source>
        <strain>Philadelphia 1 / ATCC 33152 / DSM 7513</strain>
    </source>
</reference>
<gene>
    <name evidence="1" type="primary">yciB</name>
    <name type="ordered locus">lpg1293</name>
</gene>
<keyword id="KW-0997">Cell inner membrane</keyword>
<keyword id="KW-1003">Cell membrane</keyword>
<keyword id="KW-0472">Membrane</keyword>
<keyword id="KW-1185">Reference proteome</keyword>
<keyword id="KW-0812">Transmembrane</keyword>
<keyword id="KW-1133">Transmembrane helix</keyword>
<accession>Q5ZVZ5</accession>
<feature type="chain" id="PRO_1000021025" description="Inner membrane-spanning protein YciB">
    <location>
        <begin position="1"/>
        <end position="181"/>
    </location>
</feature>
<feature type="transmembrane region" description="Helical" evidence="1">
    <location>
        <begin position="3"/>
        <end position="23"/>
    </location>
</feature>
<feature type="transmembrane region" description="Helical" evidence="1">
    <location>
        <begin position="54"/>
        <end position="74"/>
    </location>
</feature>
<feature type="transmembrane region" description="Helical" evidence="1">
    <location>
        <begin position="81"/>
        <end position="101"/>
    </location>
</feature>
<feature type="transmembrane region" description="Helical" evidence="1">
    <location>
        <begin position="119"/>
        <end position="139"/>
    </location>
</feature>
<feature type="transmembrane region" description="Helical" evidence="1">
    <location>
        <begin position="149"/>
        <end position="169"/>
    </location>
</feature>
<protein>
    <recommendedName>
        <fullName evidence="1">Inner membrane-spanning protein YciB</fullName>
    </recommendedName>
</protein>
<name>YCIB_LEGPH</name>
<proteinExistence type="inferred from homology"/>
<sequence>MKLLFDFFPIVLFFIVYKFFGIYTATAVAMVASLTQVAFYRLKFQHYEKMHLFSLAIIMVLGGATLFFQNPWFIKWKPTGIYWLSALVFYGSSYIGSKPLIQKMMEANINLTTKIWYRLNLAWTLFFIVMGALNLYVAYHYDTDVWVNFKLFGGVGFTLLFVLIQAFYLTKHTDEKSFEKQ</sequence>